<protein>
    <recommendedName>
        <fullName evidence="1">Thiamine kinase</fullName>
        <ecNumber evidence="1">2.7.1.89</ecNumber>
    </recommendedName>
</protein>
<evidence type="ECO:0000255" key="1">
    <source>
        <dbReference type="HAMAP-Rule" id="MF_01604"/>
    </source>
</evidence>
<name>THIK_SHIFL</name>
<proteinExistence type="inferred from homology"/>
<dbReference type="EC" id="2.7.1.89" evidence="1"/>
<dbReference type="EMBL" id="AE005674">
    <property type="protein sequence ID" value="AAN42728.1"/>
    <property type="molecule type" value="Genomic_DNA"/>
</dbReference>
<dbReference type="EMBL" id="AE014073">
    <property type="protein sequence ID" value="AAP16616.1"/>
    <property type="molecule type" value="Genomic_DNA"/>
</dbReference>
<dbReference type="RefSeq" id="NP_707021.1">
    <property type="nucleotide sequence ID" value="NC_004337.2"/>
</dbReference>
<dbReference type="RefSeq" id="WP_001116580.1">
    <property type="nucleotide sequence ID" value="NZ_WPGW01000001.1"/>
</dbReference>
<dbReference type="SMR" id="Q83LH9"/>
<dbReference type="STRING" id="198214.SF1110"/>
<dbReference type="PaxDb" id="198214-SF1110"/>
<dbReference type="GeneID" id="1024080"/>
<dbReference type="KEGG" id="sfl:SF1110"/>
<dbReference type="KEGG" id="sfx:S1190"/>
<dbReference type="PATRIC" id="fig|198214.7.peg.1300"/>
<dbReference type="HOGENOM" id="CLU_055115_2_1_6"/>
<dbReference type="UniPathway" id="UPA00060">
    <property type="reaction ID" value="UER00596"/>
</dbReference>
<dbReference type="Proteomes" id="UP000001006">
    <property type="component" value="Chromosome"/>
</dbReference>
<dbReference type="Proteomes" id="UP000002673">
    <property type="component" value="Chromosome"/>
</dbReference>
<dbReference type="GO" id="GO:0005524">
    <property type="term" value="F:ATP binding"/>
    <property type="evidence" value="ECO:0007669"/>
    <property type="project" value="UniProtKB-KW"/>
</dbReference>
<dbReference type="GO" id="GO:0019165">
    <property type="term" value="F:thiamine kinase activity"/>
    <property type="evidence" value="ECO:0007669"/>
    <property type="project" value="UniProtKB-UniRule"/>
</dbReference>
<dbReference type="GO" id="GO:0009229">
    <property type="term" value="P:thiamine diphosphate biosynthetic process"/>
    <property type="evidence" value="ECO:0007669"/>
    <property type="project" value="UniProtKB-UniRule"/>
</dbReference>
<dbReference type="GO" id="GO:0006772">
    <property type="term" value="P:thiamine metabolic process"/>
    <property type="evidence" value="ECO:0007669"/>
    <property type="project" value="InterPro"/>
</dbReference>
<dbReference type="FunFam" id="3.90.1200.10:FF:000004">
    <property type="entry name" value="Thiamine kinase"/>
    <property type="match status" value="1"/>
</dbReference>
<dbReference type="Gene3D" id="3.90.1200.10">
    <property type="match status" value="1"/>
</dbReference>
<dbReference type="HAMAP" id="MF_01604">
    <property type="entry name" value="Thiamine_kinase"/>
    <property type="match status" value="1"/>
</dbReference>
<dbReference type="InterPro" id="IPR002575">
    <property type="entry name" value="Aminoglycoside_PTrfase"/>
</dbReference>
<dbReference type="InterPro" id="IPR011009">
    <property type="entry name" value="Kinase-like_dom_sf"/>
</dbReference>
<dbReference type="InterPro" id="IPR014093">
    <property type="entry name" value="Thiamine_kinase"/>
</dbReference>
<dbReference type="NCBIfam" id="NF007620">
    <property type="entry name" value="PRK10271.1"/>
    <property type="match status" value="1"/>
</dbReference>
<dbReference type="NCBIfam" id="TIGR02721">
    <property type="entry name" value="ycfN_thiK"/>
    <property type="match status" value="1"/>
</dbReference>
<dbReference type="Pfam" id="PF01636">
    <property type="entry name" value="APH"/>
    <property type="match status" value="1"/>
</dbReference>
<dbReference type="SUPFAM" id="SSF56112">
    <property type="entry name" value="Protein kinase-like (PK-like)"/>
    <property type="match status" value="1"/>
</dbReference>
<organism>
    <name type="scientific">Shigella flexneri</name>
    <dbReference type="NCBI Taxonomy" id="623"/>
    <lineage>
        <taxon>Bacteria</taxon>
        <taxon>Pseudomonadati</taxon>
        <taxon>Pseudomonadota</taxon>
        <taxon>Gammaproteobacteria</taxon>
        <taxon>Enterobacterales</taxon>
        <taxon>Enterobacteriaceae</taxon>
        <taxon>Shigella</taxon>
    </lineage>
</organism>
<sequence length="274" mass="32351">MPFRSNNPITRDELLSRFFPQFHPVTTFNSGLSGGSFLIEHQGQRFVVRQPHDPDAPQSAFLRQYRALSQLPASIAPKPHLYLRDWMVVDYLPGAVKTYLPDTNELAGLLYYLHQQPRFGWRITLLPLLELYWQQSDPARRTVGWLRMLKRLRKAREPRPLRLSPLHMDVHAGNLVHSASGLKLIDWEYAGDGDIALELAAVWVENTEQHRQLVNDYATRAKIYPAQLWRQVRRWFPWLLMLKGGWFEYRWRQTGDQQFIRLADDTWRQLLIKQ</sequence>
<accession>Q83LH9</accession>
<accession>Q7C215</accession>
<comment type="function">
    <text evidence="1">Catalyzes the ATP-dependent phosphorylation of thiamine to thiamine phosphate. Is involved in thiamine salvage.</text>
</comment>
<comment type="catalytic activity">
    <reaction evidence="1">
        <text>thiamine + ATP = thiamine phosphate + ADP + H(+)</text>
        <dbReference type="Rhea" id="RHEA:12012"/>
        <dbReference type="ChEBI" id="CHEBI:15378"/>
        <dbReference type="ChEBI" id="CHEBI:18385"/>
        <dbReference type="ChEBI" id="CHEBI:30616"/>
        <dbReference type="ChEBI" id="CHEBI:37575"/>
        <dbReference type="ChEBI" id="CHEBI:456216"/>
        <dbReference type="EC" id="2.7.1.89"/>
    </reaction>
    <physiologicalReaction direction="left-to-right" evidence="1">
        <dbReference type="Rhea" id="RHEA:12013"/>
    </physiologicalReaction>
</comment>
<comment type="pathway">
    <text evidence="1">Cofactor biosynthesis; thiamine diphosphate biosynthesis; thiamine phosphate from thiamine: step 1/1.</text>
</comment>
<comment type="similarity">
    <text evidence="1">Belongs to the thiamine kinase family.</text>
</comment>
<gene>
    <name evidence="1" type="primary">thiK</name>
    <name type="ordered locus">SF1110</name>
    <name type="ordered locus">S1190</name>
</gene>
<feature type="chain" id="PRO_0000218063" description="Thiamine kinase">
    <location>
        <begin position="1"/>
        <end position="274"/>
    </location>
</feature>
<keyword id="KW-0067">ATP-binding</keyword>
<keyword id="KW-0418">Kinase</keyword>
<keyword id="KW-0547">Nucleotide-binding</keyword>
<keyword id="KW-1185">Reference proteome</keyword>
<keyword id="KW-0808">Transferase</keyword>
<reference key="1">
    <citation type="journal article" date="2002" name="Nucleic Acids Res.">
        <title>Genome sequence of Shigella flexneri 2a: insights into pathogenicity through comparison with genomes of Escherichia coli K12 and O157.</title>
        <authorList>
            <person name="Jin Q."/>
            <person name="Yuan Z."/>
            <person name="Xu J."/>
            <person name="Wang Y."/>
            <person name="Shen Y."/>
            <person name="Lu W."/>
            <person name="Wang J."/>
            <person name="Liu H."/>
            <person name="Yang J."/>
            <person name="Yang F."/>
            <person name="Zhang X."/>
            <person name="Zhang J."/>
            <person name="Yang G."/>
            <person name="Wu H."/>
            <person name="Qu D."/>
            <person name="Dong J."/>
            <person name="Sun L."/>
            <person name="Xue Y."/>
            <person name="Zhao A."/>
            <person name="Gao Y."/>
            <person name="Zhu J."/>
            <person name="Kan B."/>
            <person name="Ding K."/>
            <person name="Chen S."/>
            <person name="Cheng H."/>
            <person name="Yao Z."/>
            <person name="He B."/>
            <person name="Chen R."/>
            <person name="Ma D."/>
            <person name="Qiang B."/>
            <person name="Wen Y."/>
            <person name="Hou Y."/>
            <person name="Yu J."/>
        </authorList>
    </citation>
    <scope>NUCLEOTIDE SEQUENCE [LARGE SCALE GENOMIC DNA]</scope>
    <source>
        <strain>301 / Serotype 2a</strain>
    </source>
</reference>
<reference key="2">
    <citation type="journal article" date="2003" name="Infect. Immun.">
        <title>Complete genome sequence and comparative genomics of Shigella flexneri serotype 2a strain 2457T.</title>
        <authorList>
            <person name="Wei J."/>
            <person name="Goldberg M.B."/>
            <person name="Burland V."/>
            <person name="Venkatesan M.M."/>
            <person name="Deng W."/>
            <person name="Fournier G."/>
            <person name="Mayhew G.F."/>
            <person name="Plunkett G. III"/>
            <person name="Rose D.J."/>
            <person name="Darling A."/>
            <person name="Mau B."/>
            <person name="Perna N.T."/>
            <person name="Payne S.M."/>
            <person name="Runyen-Janecky L.J."/>
            <person name="Zhou S."/>
            <person name="Schwartz D.C."/>
            <person name="Blattner F.R."/>
        </authorList>
    </citation>
    <scope>NUCLEOTIDE SEQUENCE [LARGE SCALE GENOMIC DNA]</scope>
    <source>
        <strain>ATCC 700930 / 2457T / Serotype 2a</strain>
    </source>
</reference>